<protein>
    <recommendedName>
        <fullName evidence="1">Large ribosomal subunit protein bL31B</fullName>
    </recommendedName>
    <alternativeName>
        <fullName evidence="2">50S ribosomal protein L31 type B</fullName>
    </alternativeName>
</protein>
<sequence length="87" mass="9919">MKEGIHPNYREVVFQDMSNGFKFITRSTIQTRENIELDGKTYPLAKIEVSSESHSFYTGQQKIMDTAGRVEKFKNKFGARASGKLAK</sequence>
<name>RL31B_BURCM</name>
<evidence type="ECO:0000255" key="1">
    <source>
        <dbReference type="HAMAP-Rule" id="MF_00502"/>
    </source>
</evidence>
<evidence type="ECO:0000305" key="2"/>
<dbReference type="EMBL" id="CP000440">
    <property type="protein sequence ID" value="ABI87327.1"/>
    <property type="molecule type" value="Genomic_DNA"/>
</dbReference>
<dbReference type="RefSeq" id="WP_006761151.1">
    <property type="nucleotide sequence ID" value="NZ_CP009798.1"/>
</dbReference>
<dbReference type="SMR" id="Q0BEU6"/>
<dbReference type="KEGG" id="bam:Bamb_1771"/>
<dbReference type="PATRIC" id="fig|339670.21.peg.3188"/>
<dbReference type="eggNOG" id="COG0254">
    <property type="taxonomic scope" value="Bacteria"/>
</dbReference>
<dbReference type="Proteomes" id="UP000000662">
    <property type="component" value="Chromosome 1"/>
</dbReference>
<dbReference type="GO" id="GO:1990904">
    <property type="term" value="C:ribonucleoprotein complex"/>
    <property type="evidence" value="ECO:0007669"/>
    <property type="project" value="UniProtKB-KW"/>
</dbReference>
<dbReference type="GO" id="GO:0005840">
    <property type="term" value="C:ribosome"/>
    <property type="evidence" value="ECO:0007669"/>
    <property type="project" value="UniProtKB-KW"/>
</dbReference>
<dbReference type="GO" id="GO:0003735">
    <property type="term" value="F:structural constituent of ribosome"/>
    <property type="evidence" value="ECO:0007669"/>
    <property type="project" value="InterPro"/>
</dbReference>
<dbReference type="GO" id="GO:0006412">
    <property type="term" value="P:translation"/>
    <property type="evidence" value="ECO:0007669"/>
    <property type="project" value="UniProtKB-UniRule"/>
</dbReference>
<dbReference type="Gene3D" id="4.10.830.30">
    <property type="entry name" value="Ribosomal protein L31"/>
    <property type="match status" value="1"/>
</dbReference>
<dbReference type="HAMAP" id="MF_00502">
    <property type="entry name" value="Ribosomal_bL31_2"/>
    <property type="match status" value="1"/>
</dbReference>
<dbReference type="InterPro" id="IPR034704">
    <property type="entry name" value="Ribosomal_bL28/bL31-like_sf"/>
</dbReference>
<dbReference type="InterPro" id="IPR002150">
    <property type="entry name" value="Ribosomal_bL31"/>
</dbReference>
<dbReference type="InterPro" id="IPR027493">
    <property type="entry name" value="Ribosomal_bL31_B"/>
</dbReference>
<dbReference type="InterPro" id="IPR042105">
    <property type="entry name" value="Ribosomal_bL31_sf"/>
</dbReference>
<dbReference type="NCBIfam" id="TIGR00105">
    <property type="entry name" value="L31"/>
    <property type="match status" value="1"/>
</dbReference>
<dbReference type="NCBIfam" id="NF002462">
    <property type="entry name" value="PRK01678.1"/>
    <property type="match status" value="1"/>
</dbReference>
<dbReference type="PANTHER" id="PTHR33280">
    <property type="entry name" value="50S RIBOSOMAL PROTEIN L31, CHLOROPLASTIC"/>
    <property type="match status" value="1"/>
</dbReference>
<dbReference type="PANTHER" id="PTHR33280:SF1">
    <property type="entry name" value="LARGE RIBOSOMAL SUBUNIT PROTEIN BL31C"/>
    <property type="match status" value="1"/>
</dbReference>
<dbReference type="Pfam" id="PF01197">
    <property type="entry name" value="Ribosomal_L31"/>
    <property type="match status" value="1"/>
</dbReference>
<dbReference type="PRINTS" id="PR01249">
    <property type="entry name" value="RIBOSOMALL31"/>
</dbReference>
<dbReference type="SUPFAM" id="SSF143800">
    <property type="entry name" value="L28p-like"/>
    <property type="match status" value="1"/>
</dbReference>
<proteinExistence type="inferred from homology"/>
<gene>
    <name evidence="1" type="primary">rpmE2</name>
    <name type="ordered locus">Bamb_1771</name>
</gene>
<reference key="1">
    <citation type="submission" date="2006-08" db="EMBL/GenBank/DDBJ databases">
        <title>Complete sequence of chromosome 1 of Burkholderia cepacia AMMD.</title>
        <authorList>
            <person name="Copeland A."/>
            <person name="Lucas S."/>
            <person name="Lapidus A."/>
            <person name="Barry K."/>
            <person name="Detter J.C."/>
            <person name="Glavina del Rio T."/>
            <person name="Hammon N."/>
            <person name="Israni S."/>
            <person name="Pitluck S."/>
            <person name="Bruce D."/>
            <person name="Chain P."/>
            <person name="Malfatti S."/>
            <person name="Shin M."/>
            <person name="Vergez L."/>
            <person name="Schmutz J."/>
            <person name="Larimer F."/>
            <person name="Land M."/>
            <person name="Hauser L."/>
            <person name="Kyrpides N."/>
            <person name="Kim E."/>
            <person name="Parke J."/>
            <person name="Coenye T."/>
            <person name="Konstantinidis K."/>
            <person name="Ramette A."/>
            <person name="Tiedje J."/>
            <person name="Richardson P."/>
        </authorList>
    </citation>
    <scope>NUCLEOTIDE SEQUENCE [LARGE SCALE GENOMIC DNA]</scope>
    <source>
        <strain>ATCC BAA-244 / DSM 16087 / CCUG 44356 / LMG 19182 / AMMD</strain>
    </source>
</reference>
<keyword id="KW-0687">Ribonucleoprotein</keyword>
<keyword id="KW-0689">Ribosomal protein</keyword>
<accession>Q0BEU6</accession>
<organism>
    <name type="scientific">Burkholderia ambifaria (strain ATCC BAA-244 / DSM 16087 / CCUG 44356 / LMG 19182 / AMMD)</name>
    <name type="common">Burkholderia cepacia (strain AMMD)</name>
    <dbReference type="NCBI Taxonomy" id="339670"/>
    <lineage>
        <taxon>Bacteria</taxon>
        <taxon>Pseudomonadati</taxon>
        <taxon>Pseudomonadota</taxon>
        <taxon>Betaproteobacteria</taxon>
        <taxon>Burkholderiales</taxon>
        <taxon>Burkholderiaceae</taxon>
        <taxon>Burkholderia</taxon>
        <taxon>Burkholderia cepacia complex</taxon>
    </lineage>
</organism>
<comment type="subunit">
    <text evidence="1">Part of the 50S ribosomal subunit.</text>
</comment>
<comment type="similarity">
    <text evidence="1">Belongs to the bacterial ribosomal protein bL31 family. Type B subfamily.</text>
</comment>
<feature type="chain" id="PRO_1000014687" description="Large ribosomal subunit protein bL31B">
    <location>
        <begin position="1"/>
        <end position="87"/>
    </location>
</feature>